<feature type="chain" id="PRO_0000453448" description="Short chain dehydrogenase/reductase dmxR12">
    <location>
        <begin position="1"/>
        <end position="246"/>
    </location>
</feature>
<feature type="active site" description="Lowers pKa of active site Tyr" evidence="2">
    <location>
        <position position="164"/>
    </location>
</feature>
<feature type="binding site" evidence="1">
    <location>
        <position position="15"/>
    </location>
    <ligand>
        <name>NADP(+)</name>
        <dbReference type="ChEBI" id="CHEBI:58349"/>
    </ligand>
</feature>
<feature type="binding site" evidence="1">
    <location>
        <position position="34"/>
    </location>
    <ligand>
        <name>NADP(+)</name>
        <dbReference type="ChEBI" id="CHEBI:58349"/>
    </ligand>
</feature>
<feature type="binding site" evidence="1">
    <location>
        <position position="125"/>
    </location>
    <ligand>
        <name>NADP(+)</name>
        <dbReference type="ChEBI" id="CHEBI:58349"/>
    </ligand>
</feature>
<feature type="binding site" evidence="2">
    <location>
        <position position="164"/>
    </location>
    <ligand>
        <name>NADP(+)</name>
        <dbReference type="ChEBI" id="CHEBI:58349"/>
    </ligand>
</feature>
<sequence length="246" mass="26267">MSSPIVLIFGAGANIGYNVAKEFVASGYKAVLTSRKAPTEPDASFSYVQGDLSDPKSVTDTFSQVRKQFGEPSVVVYNGNSKWHSNKEIAAAVSFTAKEDPFVVDLPTFEKDLNINTTSTFVAIKEALASFAALPETASRTFIYTGNAMNFLPFGGAMTLGAGKSASAHMIAAAAAAYAPKGYKFYYPDERQPDGRLGGRGISGEAHAKIYKKLSEDKTQGPWLQTFVKGTGYVSFPADTDVSVAH</sequence>
<organism>
    <name type="scientific">Cryptosporiopsis sp. (strain 8999)</name>
    <dbReference type="NCBI Taxonomy" id="2572248"/>
    <lineage>
        <taxon>Eukaryota</taxon>
        <taxon>Fungi</taxon>
        <taxon>Dikarya</taxon>
        <taxon>Ascomycota</taxon>
        <taxon>Pezizomycotina</taxon>
        <taxon>Leotiomycetes</taxon>
        <taxon>Helotiales</taxon>
        <taxon>Dermateaceae</taxon>
        <taxon>Cryptosporiopsis</taxon>
    </lineage>
</organism>
<protein>
    <recommendedName>
        <fullName evidence="4">Short chain dehydrogenase/reductase dmxR12</fullName>
        <shortName evidence="4">SDR dmxR12</shortName>
        <ecNumber evidence="6">1.1.1.-</ecNumber>
    </recommendedName>
    <alternativeName>
        <fullName evidence="4">Dimeric xanthone biosynthesis cluster protein R12</fullName>
    </alternativeName>
</protein>
<gene>
    <name evidence="4" type="primary">dmxR12</name>
</gene>
<reference key="1">
    <citation type="journal article" date="2019" name="Chem. Sci.">
        <title>Structure revision of cryptosporioptides and determination of the genetic basis for dimeric xanthone biosynthesis in fungi.</title>
        <authorList>
            <person name="Greco C."/>
            <person name="de Mattos-Shipley K."/>
            <person name="Bailey A.M."/>
            <person name="Mulholland N.P."/>
            <person name="Vincent J.L."/>
            <person name="Willis C.L."/>
            <person name="Cox R.J."/>
            <person name="Simpson T.J."/>
        </authorList>
    </citation>
    <scope>NUCLEOTIDE SEQUENCE [GENOMIC DNA]</scope>
    <scope>FUNCTION</scope>
    <scope>PATHWAY</scope>
    <source>
        <strain>8999</strain>
    </source>
</reference>
<name>DMR12_CRYX8</name>
<evidence type="ECO:0000250" key="1">
    <source>
        <dbReference type="UniProtKB" id="L0E2Z4"/>
    </source>
</evidence>
<evidence type="ECO:0000250" key="2">
    <source>
        <dbReference type="UniProtKB" id="O93868"/>
    </source>
</evidence>
<evidence type="ECO:0000269" key="3">
    <source>
    </source>
</evidence>
<evidence type="ECO:0000303" key="4">
    <source>
    </source>
</evidence>
<evidence type="ECO:0000305" key="5"/>
<evidence type="ECO:0000305" key="6">
    <source>
    </source>
</evidence>
<accession>A0A4P8DJY5</accession>
<comment type="function">
    <text evidence="3 6">Short chain dehydrogenase/reductase; part of the gene cluster that mediates the biosynthesis of the dimeric xanthones cryptosporioptides (PubMed:30996871). The pathway begins with the synthesis of atrochrysone thioester by the polyketide synthase dmx-nrPKS (Probable). The atrochrysone carboxyl ACP thioesterase dmxR1 then breaks the thioester bond and releases the atrochrysone carboxylic acid from dmx-nrPKS (Probable). Atrochrysone carboxylic acid is decarboxylated by the decarboxylase dmxR15, and oxidized by the anthrone oxygenase dmxR16 to yield emodin (Probable). Emodin is then reduced to emodin hydroquinone by the oxidoreductase dmxR7 (Probable). A-ring reduction by the short chain dehydrogenase dmxR18, dehydration by the scytalone dehydratase-like protein dmxR17 and probable spontaneous re-oxidation, results in overall deoxygenation to chrysophanol (PubMed:30996871). Baeyer-Villiger oxidation by the Baeyer-Villiger monooxygenase (BVMO) dmxR6 then yields monodictylactone in equilibrium with monodictyphenone (PubMed:30996871). In the case of the cryptosporioptides biosynthesis, monodictylactone is reduced at C-12 to an alcohol (by the short chain dehydrogenases dmxR12 or dmxR8) and hydroxylated at C-5 by dmxR9, yielding the electron-rich aromatic which could eliminate H(2)O to form the ortho-quinonemethide, followed by tautomerisation to paraquinone and complete the formal reduction to produce the 10-methylgroup (Probable). Conjugate addition of C-4a-OH to the resulting paraquinone by the monooxygenase dmxR10 then gives cyclohexadienone, which is then reduced at C-5 by the short chain dehydrogenase dmxR3 to give the dihydroxanthone (Probable). The 6,7-epoxide in the cryptosporioptides could be introduced by the cytochrome P450 monooxygenase dmxL3 (Probable). The highly reducing PKS dmxL2 manufactures butyrate, which is further carboxylated by dmxL1 to form ethylmalonate (PubMed:30996871). It is not yet clear whether the carboxylation occurs while the butyrate is attached to the ACP of dmxL2, but this unusual fungal metabolite could then be esterified to O-5 by the O-acetyltransferase dmxR13 (PubMed:30996871). Finally, dimerization performed by dmxR5 gives the observed dimers cryptosporioptides A, B and C as the final products of the pathway (PubMed:30996871).</text>
</comment>
<comment type="pathway">
    <text evidence="6">Secondary metabolite biosynthesis.</text>
</comment>
<comment type="similarity">
    <text evidence="5">Belongs to the short-chain dehydrogenases/reductases (SDR) family.</text>
</comment>
<keyword id="KW-0521">NADP</keyword>
<keyword id="KW-0560">Oxidoreductase</keyword>
<dbReference type="EC" id="1.1.1.-" evidence="6"/>
<dbReference type="EMBL" id="MK182094">
    <property type="protein sequence ID" value="QCL09103.1"/>
    <property type="molecule type" value="Genomic_DNA"/>
</dbReference>
<dbReference type="SMR" id="A0A4P8DJY5"/>
<dbReference type="GO" id="GO:0016491">
    <property type="term" value="F:oxidoreductase activity"/>
    <property type="evidence" value="ECO:0007669"/>
    <property type="project" value="UniProtKB-KW"/>
</dbReference>
<dbReference type="CDD" id="cd05233">
    <property type="entry name" value="SDR_c"/>
    <property type="match status" value="1"/>
</dbReference>
<dbReference type="Gene3D" id="3.40.50.720">
    <property type="entry name" value="NAD(P)-binding Rossmann-like Domain"/>
    <property type="match status" value="1"/>
</dbReference>
<dbReference type="InterPro" id="IPR036291">
    <property type="entry name" value="NAD(P)-bd_dom_sf"/>
</dbReference>
<dbReference type="InterPro" id="IPR002347">
    <property type="entry name" value="SDR_fam"/>
</dbReference>
<dbReference type="PANTHER" id="PTHR43669">
    <property type="entry name" value="5-KETO-D-GLUCONATE 5-REDUCTASE"/>
    <property type="match status" value="1"/>
</dbReference>
<dbReference type="PANTHER" id="PTHR43669:SF4">
    <property type="entry name" value="SHORT-CHAIN DEHYDROGENASE"/>
    <property type="match status" value="1"/>
</dbReference>
<dbReference type="Pfam" id="PF00106">
    <property type="entry name" value="adh_short"/>
    <property type="match status" value="1"/>
</dbReference>
<dbReference type="SUPFAM" id="SSF51735">
    <property type="entry name" value="NAD(P)-binding Rossmann-fold domains"/>
    <property type="match status" value="1"/>
</dbReference>
<proteinExistence type="inferred from homology"/>